<dbReference type="EC" id="2.4.2.7" evidence="1"/>
<dbReference type="EMBL" id="CP000494">
    <property type="protein sequence ID" value="ABQ34484.1"/>
    <property type="molecule type" value="Genomic_DNA"/>
</dbReference>
<dbReference type="RefSeq" id="WP_012042512.1">
    <property type="nucleotide sequence ID" value="NC_009485.1"/>
</dbReference>
<dbReference type="SMR" id="A5EE90"/>
<dbReference type="STRING" id="288000.BBta_2310"/>
<dbReference type="KEGG" id="bbt:BBta_2310"/>
<dbReference type="eggNOG" id="COG0503">
    <property type="taxonomic scope" value="Bacteria"/>
</dbReference>
<dbReference type="HOGENOM" id="CLU_063339_3_0_5"/>
<dbReference type="OrthoDB" id="9803963at2"/>
<dbReference type="UniPathway" id="UPA00588">
    <property type="reaction ID" value="UER00646"/>
</dbReference>
<dbReference type="Proteomes" id="UP000000246">
    <property type="component" value="Chromosome"/>
</dbReference>
<dbReference type="GO" id="GO:0005737">
    <property type="term" value="C:cytoplasm"/>
    <property type="evidence" value="ECO:0007669"/>
    <property type="project" value="UniProtKB-SubCell"/>
</dbReference>
<dbReference type="GO" id="GO:0002055">
    <property type="term" value="F:adenine binding"/>
    <property type="evidence" value="ECO:0007669"/>
    <property type="project" value="TreeGrafter"/>
</dbReference>
<dbReference type="GO" id="GO:0003999">
    <property type="term" value="F:adenine phosphoribosyltransferase activity"/>
    <property type="evidence" value="ECO:0007669"/>
    <property type="project" value="UniProtKB-UniRule"/>
</dbReference>
<dbReference type="GO" id="GO:0016208">
    <property type="term" value="F:AMP binding"/>
    <property type="evidence" value="ECO:0007669"/>
    <property type="project" value="TreeGrafter"/>
</dbReference>
<dbReference type="GO" id="GO:0006168">
    <property type="term" value="P:adenine salvage"/>
    <property type="evidence" value="ECO:0007669"/>
    <property type="project" value="InterPro"/>
</dbReference>
<dbReference type="GO" id="GO:0044209">
    <property type="term" value="P:AMP salvage"/>
    <property type="evidence" value="ECO:0007669"/>
    <property type="project" value="UniProtKB-UniRule"/>
</dbReference>
<dbReference type="GO" id="GO:0006166">
    <property type="term" value="P:purine ribonucleoside salvage"/>
    <property type="evidence" value="ECO:0007669"/>
    <property type="project" value="UniProtKB-KW"/>
</dbReference>
<dbReference type="CDD" id="cd06223">
    <property type="entry name" value="PRTases_typeI"/>
    <property type="match status" value="1"/>
</dbReference>
<dbReference type="FunFam" id="3.40.50.2020:FF:000021">
    <property type="entry name" value="Adenine phosphoribosyltransferase"/>
    <property type="match status" value="1"/>
</dbReference>
<dbReference type="Gene3D" id="3.40.50.2020">
    <property type="match status" value="1"/>
</dbReference>
<dbReference type="HAMAP" id="MF_00004">
    <property type="entry name" value="Aden_phosphoribosyltr"/>
    <property type="match status" value="1"/>
</dbReference>
<dbReference type="InterPro" id="IPR005764">
    <property type="entry name" value="Ade_phspho_trans"/>
</dbReference>
<dbReference type="InterPro" id="IPR000836">
    <property type="entry name" value="PRibTrfase_dom"/>
</dbReference>
<dbReference type="InterPro" id="IPR029057">
    <property type="entry name" value="PRTase-like"/>
</dbReference>
<dbReference type="InterPro" id="IPR050054">
    <property type="entry name" value="UPRTase/APRTase"/>
</dbReference>
<dbReference type="NCBIfam" id="TIGR01090">
    <property type="entry name" value="apt"/>
    <property type="match status" value="1"/>
</dbReference>
<dbReference type="NCBIfam" id="NF002634">
    <property type="entry name" value="PRK02304.1-3"/>
    <property type="match status" value="1"/>
</dbReference>
<dbReference type="NCBIfam" id="NF002636">
    <property type="entry name" value="PRK02304.1-5"/>
    <property type="match status" value="1"/>
</dbReference>
<dbReference type="PANTHER" id="PTHR32315">
    <property type="entry name" value="ADENINE PHOSPHORIBOSYLTRANSFERASE"/>
    <property type="match status" value="1"/>
</dbReference>
<dbReference type="PANTHER" id="PTHR32315:SF3">
    <property type="entry name" value="ADENINE PHOSPHORIBOSYLTRANSFERASE"/>
    <property type="match status" value="1"/>
</dbReference>
<dbReference type="Pfam" id="PF00156">
    <property type="entry name" value="Pribosyltran"/>
    <property type="match status" value="1"/>
</dbReference>
<dbReference type="SUPFAM" id="SSF53271">
    <property type="entry name" value="PRTase-like"/>
    <property type="match status" value="1"/>
</dbReference>
<dbReference type="PROSITE" id="PS00103">
    <property type="entry name" value="PUR_PYR_PR_TRANSFER"/>
    <property type="match status" value="1"/>
</dbReference>
<organism>
    <name type="scientific">Bradyrhizobium sp. (strain BTAi1 / ATCC BAA-1182)</name>
    <dbReference type="NCBI Taxonomy" id="288000"/>
    <lineage>
        <taxon>Bacteria</taxon>
        <taxon>Pseudomonadati</taxon>
        <taxon>Pseudomonadota</taxon>
        <taxon>Alphaproteobacteria</taxon>
        <taxon>Hyphomicrobiales</taxon>
        <taxon>Nitrobacteraceae</taxon>
        <taxon>Bradyrhizobium</taxon>
    </lineage>
</organism>
<evidence type="ECO:0000255" key="1">
    <source>
        <dbReference type="HAMAP-Rule" id="MF_00004"/>
    </source>
</evidence>
<name>APT_BRASB</name>
<gene>
    <name evidence="1" type="primary">apt</name>
    <name type="ordered locus">BBta_2310</name>
</gene>
<proteinExistence type="inferred from homology"/>
<sequence length="179" mass="19225">MTFDLDIKNTVRTIPDYPKPGILFRDITTLLADARAFRRAVDELVHPWAGSKIDKVAGIEARGFILGGAVAHQLSAGFVPIRKKGKLPHKTVSMSYALEYGTDEMEMHVDAVQPGERVILVDDLIATGGTAEGAVKLLRQIGATVVAACFIIDLPDLGGAAKLRALDVPVRALIAFEGH</sequence>
<accession>A5EE90</accession>
<protein>
    <recommendedName>
        <fullName evidence="1">Adenine phosphoribosyltransferase</fullName>
        <shortName evidence="1">APRT</shortName>
        <ecNumber evidence="1">2.4.2.7</ecNumber>
    </recommendedName>
</protein>
<keyword id="KW-0963">Cytoplasm</keyword>
<keyword id="KW-0328">Glycosyltransferase</keyword>
<keyword id="KW-0660">Purine salvage</keyword>
<keyword id="KW-1185">Reference proteome</keyword>
<keyword id="KW-0808">Transferase</keyword>
<comment type="function">
    <text evidence="1">Catalyzes a salvage reaction resulting in the formation of AMP, that is energically less costly than de novo synthesis.</text>
</comment>
<comment type="catalytic activity">
    <reaction evidence="1">
        <text>AMP + diphosphate = 5-phospho-alpha-D-ribose 1-diphosphate + adenine</text>
        <dbReference type="Rhea" id="RHEA:16609"/>
        <dbReference type="ChEBI" id="CHEBI:16708"/>
        <dbReference type="ChEBI" id="CHEBI:33019"/>
        <dbReference type="ChEBI" id="CHEBI:58017"/>
        <dbReference type="ChEBI" id="CHEBI:456215"/>
        <dbReference type="EC" id="2.4.2.7"/>
    </reaction>
</comment>
<comment type="pathway">
    <text evidence="1">Purine metabolism; AMP biosynthesis via salvage pathway; AMP from adenine: step 1/1.</text>
</comment>
<comment type="subunit">
    <text evidence="1">Homodimer.</text>
</comment>
<comment type="subcellular location">
    <subcellularLocation>
        <location evidence="1">Cytoplasm</location>
    </subcellularLocation>
</comment>
<comment type="similarity">
    <text evidence="1">Belongs to the purine/pyrimidine phosphoribosyltransferase family.</text>
</comment>
<feature type="chain" id="PRO_1000000261" description="Adenine phosphoribosyltransferase">
    <location>
        <begin position="1"/>
        <end position="179"/>
    </location>
</feature>
<reference key="1">
    <citation type="journal article" date="2007" name="Science">
        <title>Legumes symbioses: absence of nod genes in photosynthetic bradyrhizobia.</title>
        <authorList>
            <person name="Giraud E."/>
            <person name="Moulin L."/>
            <person name="Vallenet D."/>
            <person name="Barbe V."/>
            <person name="Cytryn E."/>
            <person name="Avarre J.-C."/>
            <person name="Jaubert M."/>
            <person name="Simon D."/>
            <person name="Cartieaux F."/>
            <person name="Prin Y."/>
            <person name="Bena G."/>
            <person name="Hannibal L."/>
            <person name="Fardoux J."/>
            <person name="Kojadinovic M."/>
            <person name="Vuillet L."/>
            <person name="Lajus A."/>
            <person name="Cruveiller S."/>
            <person name="Rouy Z."/>
            <person name="Mangenot S."/>
            <person name="Segurens B."/>
            <person name="Dossat C."/>
            <person name="Franck W.L."/>
            <person name="Chang W.-S."/>
            <person name="Saunders E."/>
            <person name="Bruce D."/>
            <person name="Richardson P."/>
            <person name="Normand P."/>
            <person name="Dreyfus B."/>
            <person name="Pignol D."/>
            <person name="Stacey G."/>
            <person name="Emerich D."/>
            <person name="Vermeglio A."/>
            <person name="Medigue C."/>
            <person name="Sadowsky M."/>
        </authorList>
    </citation>
    <scope>NUCLEOTIDE SEQUENCE [LARGE SCALE GENOMIC DNA]</scope>
    <source>
        <strain>BTAi1 / ATCC BAA-1182</strain>
    </source>
</reference>